<dbReference type="EMBL" id="BX908798">
    <property type="protein sequence ID" value="CAF24316.1"/>
    <property type="molecule type" value="Genomic_DNA"/>
</dbReference>
<dbReference type="RefSeq" id="WP_011176138.1">
    <property type="nucleotide sequence ID" value="NC_005861.2"/>
</dbReference>
<dbReference type="SMR" id="Q6MAT3"/>
<dbReference type="STRING" id="264201.pc1592"/>
<dbReference type="KEGG" id="pcu:PC_RS07625"/>
<dbReference type="eggNOG" id="COG0360">
    <property type="taxonomic scope" value="Bacteria"/>
</dbReference>
<dbReference type="HOGENOM" id="CLU_113441_5_2_0"/>
<dbReference type="OrthoDB" id="9812702at2"/>
<dbReference type="Proteomes" id="UP000000529">
    <property type="component" value="Chromosome"/>
</dbReference>
<dbReference type="GO" id="GO:0005737">
    <property type="term" value="C:cytoplasm"/>
    <property type="evidence" value="ECO:0007669"/>
    <property type="project" value="UniProtKB-ARBA"/>
</dbReference>
<dbReference type="GO" id="GO:1990904">
    <property type="term" value="C:ribonucleoprotein complex"/>
    <property type="evidence" value="ECO:0007669"/>
    <property type="project" value="UniProtKB-KW"/>
</dbReference>
<dbReference type="GO" id="GO:0005840">
    <property type="term" value="C:ribosome"/>
    <property type="evidence" value="ECO:0007669"/>
    <property type="project" value="UniProtKB-KW"/>
</dbReference>
<dbReference type="GO" id="GO:0070181">
    <property type="term" value="F:small ribosomal subunit rRNA binding"/>
    <property type="evidence" value="ECO:0007669"/>
    <property type="project" value="TreeGrafter"/>
</dbReference>
<dbReference type="GO" id="GO:0003735">
    <property type="term" value="F:structural constituent of ribosome"/>
    <property type="evidence" value="ECO:0007669"/>
    <property type="project" value="InterPro"/>
</dbReference>
<dbReference type="GO" id="GO:0006412">
    <property type="term" value="P:translation"/>
    <property type="evidence" value="ECO:0007669"/>
    <property type="project" value="UniProtKB-UniRule"/>
</dbReference>
<dbReference type="CDD" id="cd00473">
    <property type="entry name" value="bS6"/>
    <property type="match status" value="1"/>
</dbReference>
<dbReference type="Gene3D" id="3.30.70.60">
    <property type="match status" value="1"/>
</dbReference>
<dbReference type="HAMAP" id="MF_00360">
    <property type="entry name" value="Ribosomal_bS6"/>
    <property type="match status" value="1"/>
</dbReference>
<dbReference type="InterPro" id="IPR000529">
    <property type="entry name" value="Ribosomal_bS6"/>
</dbReference>
<dbReference type="InterPro" id="IPR035980">
    <property type="entry name" value="Ribosomal_bS6_sf"/>
</dbReference>
<dbReference type="InterPro" id="IPR020814">
    <property type="entry name" value="Ribosomal_S6_plastid/chlpt"/>
</dbReference>
<dbReference type="InterPro" id="IPR014717">
    <property type="entry name" value="Transl_elong_EF1B/ribsomal_bS6"/>
</dbReference>
<dbReference type="NCBIfam" id="TIGR00166">
    <property type="entry name" value="S6"/>
    <property type="match status" value="1"/>
</dbReference>
<dbReference type="PANTHER" id="PTHR21011">
    <property type="entry name" value="MITOCHONDRIAL 28S RIBOSOMAL PROTEIN S6"/>
    <property type="match status" value="1"/>
</dbReference>
<dbReference type="PANTHER" id="PTHR21011:SF1">
    <property type="entry name" value="SMALL RIBOSOMAL SUBUNIT PROTEIN BS6M"/>
    <property type="match status" value="1"/>
</dbReference>
<dbReference type="Pfam" id="PF01250">
    <property type="entry name" value="Ribosomal_S6"/>
    <property type="match status" value="1"/>
</dbReference>
<dbReference type="SUPFAM" id="SSF54995">
    <property type="entry name" value="Ribosomal protein S6"/>
    <property type="match status" value="1"/>
</dbReference>
<reference key="1">
    <citation type="journal article" date="2004" name="Science">
        <title>Illuminating the evolutionary history of chlamydiae.</title>
        <authorList>
            <person name="Horn M."/>
            <person name="Collingro A."/>
            <person name="Schmitz-Esser S."/>
            <person name="Beier C.L."/>
            <person name="Purkhold U."/>
            <person name="Fartmann B."/>
            <person name="Brandt P."/>
            <person name="Nyakatura G.J."/>
            <person name="Droege M."/>
            <person name="Frishman D."/>
            <person name="Rattei T."/>
            <person name="Mewes H.-W."/>
            <person name="Wagner M."/>
        </authorList>
    </citation>
    <scope>NUCLEOTIDE SEQUENCE [LARGE SCALE GENOMIC DNA]</scope>
    <source>
        <strain>UWE25</strain>
    </source>
</reference>
<name>RS6_PARUW</name>
<proteinExistence type="inferred from homology"/>
<comment type="function">
    <text evidence="1">Binds together with bS18 to 16S ribosomal RNA.</text>
</comment>
<comment type="similarity">
    <text evidence="1">Belongs to the bacterial ribosomal protein bS6 family.</text>
</comment>
<gene>
    <name evidence="1" type="primary">rpsF</name>
    <name type="ordered locus">pc1592</name>
</gene>
<feature type="chain" id="PRO_0000176810" description="Small ribosomal subunit protein bS6">
    <location>
        <begin position="1"/>
        <end position="114"/>
    </location>
</feature>
<keyword id="KW-1185">Reference proteome</keyword>
<keyword id="KW-0687">Ribonucleoprotein</keyword>
<keyword id="KW-0689">Ribosomal protein</keyword>
<keyword id="KW-0694">RNA-binding</keyword>
<keyword id="KW-0699">rRNA-binding</keyword>
<sequence length="114" mass="13385">MSQKVQNLYEGMYVISATLSDDARHKALDRIQTGITGHGGEIKKLHEQGRRRLAYEIDGHREGYYYLVYFTAPSSAISDLWQEYHLNEDLIRFITLRTDEVMEKIEFKTLDEQQ</sequence>
<accession>Q6MAT3</accession>
<evidence type="ECO:0000255" key="1">
    <source>
        <dbReference type="HAMAP-Rule" id="MF_00360"/>
    </source>
</evidence>
<evidence type="ECO:0000305" key="2"/>
<protein>
    <recommendedName>
        <fullName evidence="1">Small ribosomal subunit protein bS6</fullName>
    </recommendedName>
    <alternativeName>
        <fullName evidence="2">30S ribosomal protein S6</fullName>
    </alternativeName>
</protein>
<organism>
    <name type="scientific">Protochlamydia amoebophila (strain UWE25)</name>
    <dbReference type="NCBI Taxonomy" id="264201"/>
    <lineage>
        <taxon>Bacteria</taxon>
        <taxon>Pseudomonadati</taxon>
        <taxon>Chlamydiota</taxon>
        <taxon>Chlamydiia</taxon>
        <taxon>Parachlamydiales</taxon>
        <taxon>Parachlamydiaceae</taxon>
        <taxon>Candidatus Protochlamydia</taxon>
    </lineage>
</organism>